<reference key="1">
    <citation type="journal article" date="1992" name="Nature">
        <title>The C. elegans genome sequencing project: a beginning.</title>
        <authorList>
            <person name="Sulston J."/>
            <person name="Du Z."/>
            <person name="Thomas K."/>
            <person name="Wilson R."/>
            <person name="Hillier L."/>
            <person name="Staden R."/>
            <person name="Halloran N."/>
            <person name="Green P."/>
            <person name="Thierry-Mieg J."/>
            <person name="Qiu L."/>
            <person name="Dear S."/>
            <person name="Coulson A."/>
            <person name="Craxton M."/>
            <person name="Durbin R."/>
            <person name="Berks M."/>
            <person name="Metzstein M."/>
            <person name="Hawkins T."/>
            <person name="Ainscough R."/>
            <person name="Waterston R."/>
        </authorList>
    </citation>
    <scope>NUCLEOTIDE SEQUENCE [LARGE SCALE GENOMIC DNA]</scope>
    <source>
        <strain>Bristol N2</strain>
    </source>
</reference>
<reference key="2">
    <citation type="journal article" date="1998" name="Science">
        <title>Genome sequence of the nematode C. elegans: a platform for investigating biology.</title>
        <authorList>
            <consortium name="The C. elegans sequencing consortium"/>
        </authorList>
    </citation>
    <scope>NUCLEOTIDE SEQUENCE [LARGE SCALE GENOMIC DNA]</scope>
    <source>
        <strain>Bristol N2</strain>
    </source>
</reference>
<reference key="3">
    <citation type="journal article" date="2014" name="Elife">
        <title>LINKIN, a new transmembrane protein necessary for cell adhesion.</title>
        <authorList>
            <person name="Kato M."/>
            <person name="Chou T.F."/>
            <person name="Yu C.Z."/>
            <person name="DeModena J."/>
            <person name="Sternberg P.W."/>
        </authorList>
    </citation>
    <scope>FUNCTION</scope>
    <scope>SUBCELLULAR LOCATION</scope>
    <scope>TISSUE SPECIFICITY</scope>
    <scope>DEVELOPMENTAL STAGE</scope>
    <scope>DISRUPTION PHENOTYPE</scope>
</reference>
<organism>
    <name type="scientific">Caenorhabditis elegans</name>
    <dbReference type="NCBI Taxonomy" id="6239"/>
    <lineage>
        <taxon>Eukaryota</taxon>
        <taxon>Metazoa</taxon>
        <taxon>Ecdysozoa</taxon>
        <taxon>Nematoda</taxon>
        <taxon>Chromadorea</taxon>
        <taxon>Rhabditida</taxon>
        <taxon>Rhabditina</taxon>
        <taxon>Rhabditomorpha</taxon>
        <taxon>Rhabditoidea</taxon>
        <taxon>Rhabditidae</taxon>
        <taxon>Peloderinae</taxon>
        <taxon>Caenorhabditis</taxon>
    </lineage>
</organism>
<proteinExistence type="evidence at transcript level"/>
<protein>
    <recommendedName>
        <fullName evidence="4">Protein linkin</fullName>
    </recommendedName>
</protein>
<accession>P30639</accession>
<feature type="signal peptide" evidence="1">
    <location>
        <begin position="1"/>
        <end position="19"/>
    </location>
</feature>
<feature type="chain" id="PRO_0000065529" description="Protein linkin" evidence="5">
    <location>
        <begin position="20"/>
        <end position="599"/>
    </location>
</feature>
<feature type="topological domain" description="Extracellular" evidence="5">
    <location>
        <begin position="20"/>
        <end position="553"/>
    </location>
</feature>
<feature type="transmembrane region" description="Helical" evidence="1">
    <location>
        <begin position="554"/>
        <end position="574"/>
    </location>
</feature>
<feature type="topological domain" description="Cytoplasmic" evidence="5">
    <location>
        <begin position="575"/>
        <end position="599"/>
    </location>
</feature>
<feature type="glycosylation site" description="N-linked (GlcNAc...) asparagine" evidence="2">
    <location>
        <position position="50"/>
    </location>
</feature>
<feature type="glycosylation site" description="N-linked (GlcNAc...) asparagine" evidence="2">
    <location>
        <position position="117"/>
    </location>
</feature>
<feature type="glycosylation site" description="N-linked (GlcNAc...) asparagine" evidence="2">
    <location>
        <position position="163"/>
    </location>
</feature>
<feature type="glycosylation site" description="N-linked (GlcNAc...) asparagine" evidence="2">
    <location>
        <position position="361"/>
    </location>
</feature>
<feature type="glycosylation site" description="N-linked (GlcNAc...) asparagine" evidence="2">
    <location>
        <position position="378"/>
    </location>
</feature>
<name>LNKN1_CAEEL</name>
<sequence>MKKILPIIWLINLVSGSLSLEKKAPDLLGKVCAFGDFNADRNTDILVFANGTLTINYQETKLLDVLEASKFTPGTSFAISKPSLNADFVECSVGDFNGDSRLDVLVSIRDKDTEIYNHTLWTSEIEDEKEIFRPFHVAMLQQHAMAIDVSDDGWTDVLGFYPNGSMFCTGFNKEGKYNLLVNGCKHEFVAFPEKLNIYPGMPHLFVDLNSDLIADIVFMTKESDGSLFMSVWQKTKISWQFRDWVPKLTPAQYPFVGAPVVMDVDSDGELDILVPICREDECSHITQMASWSKTKLWGLVACDMQDYTVIKEPFSRVIFRVGEFSLDSFPDMVVIAQATRANTRPVIKVMDNAECTKCEKNGTRRFEIRAQENIQPKNMSLGVIKMGTFFDLLEDGSLDLLVEYEYGGQTRFGFIYCPDKGDTTFLKVQVFTGVCSDRCNPKSNEIGSSISMTGACASFSMTDGWGGSTQSVACQVPASSNRALYLPFLLYGLGRSPNFVDELNIAIPKYADRKEDWKHSLKQIVPNSRIIVLPPSDQYPHWTSRLYVTPSALIVQSLAVIALVCCMLLMVVVFLHYREKKEDRYERQQQSHRFHFDAM</sequence>
<gene>
    <name evidence="6" type="primary">lnkn-1</name>
    <name evidence="6" type="synonym">tag-256</name>
    <name evidence="6" type="ORF">ZK637.3</name>
</gene>
<evidence type="ECO:0000255" key="1"/>
<evidence type="ECO:0000255" key="2">
    <source>
        <dbReference type="PROSITE-ProRule" id="PRU00498"/>
    </source>
</evidence>
<evidence type="ECO:0000269" key="3">
    <source>
    </source>
</evidence>
<evidence type="ECO:0000303" key="4">
    <source>
    </source>
</evidence>
<evidence type="ECO:0000305" key="5"/>
<evidence type="ECO:0000312" key="6">
    <source>
        <dbReference type="WormBase" id="ZK637.3"/>
    </source>
</evidence>
<comment type="function">
    <text evidence="3">Probable cell adhesion protein involved in gonadal cell migration.</text>
</comment>
<comment type="subcellular location">
    <subcellularLocation>
        <location evidence="3">Apical cell membrane</location>
        <topology evidence="1">Single-pass type I membrane protein</topology>
    </subcellularLocation>
    <subcellularLocation>
        <location evidence="3">Lateral cell membrane</location>
        <topology evidence="1">Single-pass type I membrane protein</topology>
    </subcellularLocation>
</comment>
<comment type="tissue specificity">
    <text evidence="3">Expressed in all somatic gonadal cells including distal tip cells, anchor cell, uterine precursor cells and spermatheca precursor cells of the hermaphrodite. Also expressed in the pharynx, pharyngeal-intestinal valve, intestine, excretory cell and canal, seam cells, a subset of hypodermal cells, vulval precursor cells of the hermaphrodite and hook precursor cells in the male.</text>
</comment>
<comment type="developmental stage">
    <text evidence="3">Expressed in the somatic gonad from the L3 stage of larval development to adulthood.</text>
</comment>
<comment type="disruption phenotype">
    <text>Hermaphrodites are maternal effect lethal and have elongated and strained appearing distal tip cells with abnormal migration. Male animals have detached gonadal cells that do not migrate leading to a partially elongated gonad. RNAi-mediated knockdown results in a mild defective gonad phenotype with 11% of animals having detached gonads and 17% of animals having 'stringy' gonads.</text>
</comment>
<comment type="similarity">
    <text evidence="5">Belongs to the TIP family.</text>
</comment>
<dbReference type="EMBL" id="Z11115">
    <property type="protein sequence ID" value="CAA77450.1"/>
    <property type="molecule type" value="Genomic_DNA"/>
</dbReference>
<dbReference type="PIR" id="S15789">
    <property type="entry name" value="S15789"/>
</dbReference>
<dbReference type="RefSeq" id="NP_001369829.1">
    <property type="nucleotide sequence ID" value="NM_001382950.2"/>
</dbReference>
<dbReference type="RefSeq" id="NP_498963.1">
    <property type="nucleotide sequence ID" value="NM_066562.4"/>
</dbReference>
<dbReference type="BioGRID" id="41454">
    <property type="interactions" value="2"/>
</dbReference>
<dbReference type="FunCoup" id="P30639">
    <property type="interactions" value="1743"/>
</dbReference>
<dbReference type="STRING" id="6239.ZK637.3.1"/>
<dbReference type="GlyCosmos" id="P30639">
    <property type="glycosylation" value="5 sites, No reported glycans"/>
</dbReference>
<dbReference type="PaxDb" id="6239-ZK637.3"/>
<dbReference type="PeptideAtlas" id="P30639"/>
<dbReference type="EnsemblMetazoa" id="ZK637.3.1">
    <property type="protein sequence ID" value="ZK637.3.1"/>
    <property type="gene ID" value="WBGene00014023"/>
</dbReference>
<dbReference type="GeneID" id="176253"/>
<dbReference type="UCSC" id="ZK637.3">
    <property type="organism name" value="c. elegans"/>
</dbReference>
<dbReference type="AGR" id="WB:WBGene00014023"/>
<dbReference type="WormBase" id="ZK637.3">
    <property type="protein sequence ID" value="CE00434"/>
    <property type="gene ID" value="WBGene00014023"/>
    <property type="gene designation" value="lnkn-1"/>
</dbReference>
<dbReference type="eggNOG" id="KOG4550">
    <property type="taxonomic scope" value="Eukaryota"/>
</dbReference>
<dbReference type="GeneTree" id="ENSGT00390000013367"/>
<dbReference type="HOGENOM" id="CLU_020272_2_0_1"/>
<dbReference type="InParanoid" id="P30639"/>
<dbReference type="OMA" id="WQDFHIT"/>
<dbReference type="OrthoDB" id="10250728at2759"/>
<dbReference type="PhylomeDB" id="P30639"/>
<dbReference type="PRO" id="PR:P30639"/>
<dbReference type="Proteomes" id="UP000001940">
    <property type="component" value="Chromosome III"/>
</dbReference>
<dbReference type="Bgee" id="WBGene00014023">
    <property type="expression patterns" value="Expressed in pharyngeal muscle cell (C elegans) and 4 other cell types or tissues"/>
</dbReference>
<dbReference type="GO" id="GO:0016324">
    <property type="term" value="C:apical plasma membrane"/>
    <property type="evidence" value="ECO:0000314"/>
    <property type="project" value="WormBase"/>
</dbReference>
<dbReference type="GO" id="GO:0016328">
    <property type="term" value="C:lateral plasma membrane"/>
    <property type="evidence" value="ECO:0000314"/>
    <property type="project" value="WormBase"/>
</dbReference>
<dbReference type="GO" id="GO:0005886">
    <property type="term" value="C:plasma membrane"/>
    <property type="evidence" value="ECO:0007005"/>
    <property type="project" value="WormBase"/>
</dbReference>
<dbReference type="GO" id="GO:0007155">
    <property type="term" value="P:cell adhesion"/>
    <property type="evidence" value="ECO:0007669"/>
    <property type="project" value="UniProtKB-KW"/>
</dbReference>
<dbReference type="InterPro" id="IPR028994">
    <property type="entry name" value="Integrin_alpha_N"/>
</dbReference>
<dbReference type="InterPro" id="IPR024881">
    <property type="entry name" value="Tip"/>
</dbReference>
<dbReference type="PANTHER" id="PTHR13412:SF0">
    <property type="entry name" value="T-CELL IMMUNOMODULATORY PROTEIN"/>
    <property type="match status" value="1"/>
</dbReference>
<dbReference type="PANTHER" id="PTHR13412">
    <property type="entry name" value="T-CELL IMMUNOMODULATORY PROTEIN HOMOLOG"/>
    <property type="match status" value="1"/>
</dbReference>
<dbReference type="Pfam" id="PF23122">
    <property type="entry name" value="C2_ITFG1"/>
    <property type="match status" value="1"/>
</dbReference>
<dbReference type="SUPFAM" id="SSF69318">
    <property type="entry name" value="Integrin alpha N-terminal domain"/>
    <property type="match status" value="1"/>
</dbReference>
<keyword id="KW-0130">Cell adhesion</keyword>
<keyword id="KW-1003">Cell membrane</keyword>
<keyword id="KW-0325">Glycoprotein</keyword>
<keyword id="KW-0472">Membrane</keyword>
<keyword id="KW-1185">Reference proteome</keyword>
<keyword id="KW-0732">Signal</keyword>
<keyword id="KW-0812">Transmembrane</keyword>
<keyword id="KW-1133">Transmembrane helix</keyword>